<reference key="1">
    <citation type="journal article" date="2003" name="Proc. Natl. Acad. Sci. U.S.A.">
        <title>The complete genome sequence of Mycobacterium bovis.</title>
        <authorList>
            <person name="Garnier T."/>
            <person name="Eiglmeier K."/>
            <person name="Camus J.-C."/>
            <person name="Medina N."/>
            <person name="Mansoor H."/>
            <person name="Pryor M."/>
            <person name="Duthoy S."/>
            <person name="Grondin S."/>
            <person name="Lacroix C."/>
            <person name="Monsempe C."/>
            <person name="Simon S."/>
            <person name="Harris B."/>
            <person name="Atkin R."/>
            <person name="Doggett J."/>
            <person name="Mayes R."/>
            <person name="Keating L."/>
            <person name="Wheeler P.R."/>
            <person name="Parkhill J."/>
            <person name="Barrell B.G."/>
            <person name="Cole S.T."/>
            <person name="Gordon S.V."/>
            <person name="Hewinson R.G."/>
        </authorList>
    </citation>
    <scope>NUCLEOTIDE SEQUENCE [LARGE SCALE GENOMIC DNA]</scope>
    <source>
        <strain>ATCC BAA-935 / AF2122/97</strain>
    </source>
</reference>
<reference key="2">
    <citation type="journal article" date="2017" name="Genome Announc.">
        <title>Updated reference genome sequence and annotation of Mycobacterium bovis AF2122/97.</title>
        <authorList>
            <person name="Malone K.M."/>
            <person name="Farrell D."/>
            <person name="Stuber T.P."/>
            <person name="Schubert O.T."/>
            <person name="Aebersold R."/>
            <person name="Robbe-Austerman S."/>
            <person name="Gordon S.V."/>
        </authorList>
    </citation>
    <scope>NUCLEOTIDE SEQUENCE [LARGE SCALE GENOMIC DNA]</scope>
    <scope>GENOME REANNOTATION</scope>
    <source>
        <strain>ATCC BAA-935 / AF2122/97</strain>
    </source>
</reference>
<name>MSHB_MYCBO</name>
<protein>
    <recommendedName>
        <fullName evidence="1">1D-myo-inositol 2-acetamido-2-deoxy-alpha-D-glucopyranoside deacetylase</fullName>
        <shortName evidence="1">GlcNAc-Ins deacetylase</shortName>
        <ecNumber evidence="1">3.5.1.103</ecNumber>
    </recommendedName>
    <alternativeName>
        <fullName>N-acetyl-1-D-myo-inositol 2-amino-2-deoxy-alpha-D-glucopyranoside deacetylase</fullName>
    </alternativeName>
</protein>
<comment type="function">
    <text evidence="1">Catalyzes the deacetylation of 1D-myo-inositol 2-acetamido-2-deoxy-alpha-D-glucopyranoside (GlcNAc-Ins) in the mycothiol biosynthesis pathway.</text>
</comment>
<comment type="catalytic activity">
    <reaction evidence="1">
        <text>1D-myo-inositol 2-acetamido-2-deoxy-alpha-D-glucopyranoside + H2O = 1D-myo-inositol 2-amino-2-deoxy-alpha-D-glucopyranoside + acetate</text>
        <dbReference type="Rhea" id="RHEA:26180"/>
        <dbReference type="ChEBI" id="CHEBI:15377"/>
        <dbReference type="ChEBI" id="CHEBI:30089"/>
        <dbReference type="ChEBI" id="CHEBI:52442"/>
        <dbReference type="ChEBI" id="CHEBI:58886"/>
        <dbReference type="EC" id="3.5.1.103"/>
    </reaction>
</comment>
<comment type="cofactor">
    <cofactor evidence="1">
        <name>Zn(2+)</name>
        <dbReference type="ChEBI" id="CHEBI:29105"/>
    </cofactor>
    <text evidence="1">Binds 1 zinc ion per subunit.</text>
</comment>
<comment type="similarity">
    <text evidence="1">Belongs to the MshB deacetylase family.</text>
</comment>
<accession>Q7U0H2</accession>
<accession>A0A1R3XXL6</accession>
<accession>X2BHK1</accession>
<evidence type="ECO:0000255" key="1">
    <source>
        <dbReference type="HAMAP-Rule" id="MF_01696"/>
    </source>
</evidence>
<feature type="chain" id="PRO_0000400194" description="1D-myo-inositol 2-acetamido-2-deoxy-alpha-D-glucopyranoside deacetylase">
    <location>
        <begin position="1"/>
        <end position="303"/>
    </location>
</feature>
<feature type="binding site" evidence="1">
    <location>
        <position position="13"/>
    </location>
    <ligand>
        <name>Zn(2+)</name>
        <dbReference type="ChEBI" id="CHEBI:29105"/>
    </ligand>
</feature>
<feature type="binding site" evidence="1">
    <location>
        <position position="16"/>
    </location>
    <ligand>
        <name>Zn(2+)</name>
        <dbReference type="ChEBI" id="CHEBI:29105"/>
    </ligand>
</feature>
<feature type="binding site" evidence="1">
    <location>
        <position position="147"/>
    </location>
    <ligand>
        <name>Zn(2+)</name>
        <dbReference type="ChEBI" id="CHEBI:29105"/>
    </ligand>
</feature>
<keyword id="KW-0378">Hydrolase</keyword>
<keyword id="KW-0479">Metal-binding</keyword>
<keyword id="KW-1185">Reference proteome</keyword>
<keyword id="KW-0862">Zinc</keyword>
<sequence>MSETPRLLFVHAHPDDESLSNGATIAHYTSRGAQVHVVTCTLGEEGEVIGDRWAQLTADHADQLGGYRIGELTAALRALGVSAPIYLGGAGRWRDSGMAGTDQRSQRRFVDADPRQTVGALVAIIRELRPHVVVTYDPNGGYGHPDHVHTHTVTTAAVAAAGVGSGTADHPGDPWTVPKFYWTVLGLSALISGARALVPDDLRPEWVLPRADEIAFGYSDDGIDAVVEADEQARAAKVAALAAHATQVVVGPTGRAAALSNNLALPILADEHYVLAGGSAGARDERGWETDLLAGLGFTASGT</sequence>
<dbReference type="EC" id="3.5.1.103" evidence="1"/>
<dbReference type="EMBL" id="LT708304">
    <property type="protein sequence ID" value="SIT99804.1"/>
    <property type="molecule type" value="Genomic_DNA"/>
</dbReference>
<dbReference type="RefSeq" id="NP_854857.1">
    <property type="nucleotide sequence ID" value="NC_002945.3"/>
</dbReference>
<dbReference type="RefSeq" id="WP_003406154.1">
    <property type="nucleotide sequence ID" value="NC_002945.4"/>
</dbReference>
<dbReference type="SMR" id="Q7U0H2"/>
<dbReference type="GeneID" id="45425142"/>
<dbReference type="KEGG" id="mbo:BQ2027_MB1203"/>
<dbReference type="PATRIC" id="fig|233413.5.peg.1321"/>
<dbReference type="Proteomes" id="UP000001419">
    <property type="component" value="Chromosome"/>
</dbReference>
<dbReference type="GO" id="GO:0035595">
    <property type="term" value="F:N-acetylglucosaminylinositol deacetylase activity"/>
    <property type="evidence" value="ECO:0007669"/>
    <property type="project" value="UniProtKB-EC"/>
</dbReference>
<dbReference type="GO" id="GO:0008270">
    <property type="term" value="F:zinc ion binding"/>
    <property type="evidence" value="ECO:0007669"/>
    <property type="project" value="UniProtKB-UniRule"/>
</dbReference>
<dbReference type="GO" id="GO:0010125">
    <property type="term" value="P:mycothiol biosynthetic process"/>
    <property type="evidence" value="ECO:0007669"/>
    <property type="project" value="UniProtKB-UniRule"/>
</dbReference>
<dbReference type="Gene3D" id="3.40.50.10320">
    <property type="entry name" value="LmbE-like"/>
    <property type="match status" value="1"/>
</dbReference>
<dbReference type="HAMAP" id="MF_01696">
    <property type="entry name" value="MshB"/>
    <property type="match status" value="1"/>
</dbReference>
<dbReference type="InterPro" id="IPR003737">
    <property type="entry name" value="GlcNAc_PI_deacetylase-related"/>
</dbReference>
<dbReference type="InterPro" id="IPR024078">
    <property type="entry name" value="LmbE-like_dom_sf"/>
</dbReference>
<dbReference type="InterPro" id="IPR017810">
    <property type="entry name" value="Mycothiol_biosynthesis_MshB"/>
</dbReference>
<dbReference type="NCBIfam" id="TIGR03445">
    <property type="entry name" value="mycothiol_MshB"/>
    <property type="match status" value="1"/>
</dbReference>
<dbReference type="PANTHER" id="PTHR12993:SF26">
    <property type="entry name" value="1D-MYO-INOSITOL 2-ACETAMIDO-2-DEOXY-ALPHA-D-GLUCOPYRANOSIDE DEACETYLASE"/>
    <property type="match status" value="1"/>
</dbReference>
<dbReference type="PANTHER" id="PTHR12993">
    <property type="entry name" value="N-ACETYLGLUCOSAMINYL-PHOSPHATIDYLINOSITOL DE-N-ACETYLASE-RELATED"/>
    <property type="match status" value="1"/>
</dbReference>
<dbReference type="Pfam" id="PF02585">
    <property type="entry name" value="PIG-L"/>
    <property type="match status" value="1"/>
</dbReference>
<dbReference type="SUPFAM" id="SSF102588">
    <property type="entry name" value="LmbE-like"/>
    <property type="match status" value="1"/>
</dbReference>
<proteinExistence type="inferred from homology"/>
<organism>
    <name type="scientific">Mycobacterium bovis (strain ATCC BAA-935 / AF2122/97)</name>
    <dbReference type="NCBI Taxonomy" id="233413"/>
    <lineage>
        <taxon>Bacteria</taxon>
        <taxon>Bacillati</taxon>
        <taxon>Actinomycetota</taxon>
        <taxon>Actinomycetes</taxon>
        <taxon>Mycobacteriales</taxon>
        <taxon>Mycobacteriaceae</taxon>
        <taxon>Mycobacterium</taxon>
        <taxon>Mycobacterium tuberculosis complex</taxon>
    </lineage>
</organism>
<gene>
    <name evidence="1" type="primary">mshB</name>
    <name type="ordered locus">BQ2027_MB1203</name>
</gene>